<organism>
    <name type="scientific">Listeria monocytogenes serovar 1/2a (strain ATCC BAA-679 / EGD-e)</name>
    <dbReference type="NCBI Taxonomy" id="169963"/>
    <lineage>
        <taxon>Bacteria</taxon>
        <taxon>Bacillati</taxon>
        <taxon>Bacillota</taxon>
        <taxon>Bacilli</taxon>
        <taxon>Bacillales</taxon>
        <taxon>Listeriaceae</taxon>
        <taxon>Listeria</taxon>
    </lineage>
</organism>
<comment type="function">
    <text evidence="1">Is required not only for elongation of protein synthesis but also for the initiation of all mRNA translation through initiator tRNA(fMet) aminoacylation.</text>
</comment>
<comment type="catalytic activity">
    <reaction>
        <text>tRNA(Met) + L-methionine + ATP = L-methionyl-tRNA(Met) + AMP + diphosphate</text>
        <dbReference type="Rhea" id="RHEA:13481"/>
        <dbReference type="Rhea" id="RHEA-COMP:9667"/>
        <dbReference type="Rhea" id="RHEA-COMP:9698"/>
        <dbReference type="ChEBI" id="CHEBI:30616"/>
        <dbReference type="ChEBI" id="CHEBI:33019"/>
        <dbReference type="ChEBI" id="CHEBI:57844"/>
        <dbReference type="ChEBI" id="CHEBI:78442"/>
        <dbReference type="ChEBI" id="CHEBI:78530"/>
        <dbReference type="ChEBI" id="CHEBI:456215"/>
        <dbReference type="EC" id="6.1.1.10"/>
    </reaction>
</comment>
<comment type="subunit">
    <text evidence="1">Homodimer.</text>
</comment>
<comment type="subcellular location">
    <subcellularLocation>
        <location evidence="1">Cytoplasm</location>
    </subcellularLocation>
</comment>
<comment type="similarity">
    <text evidence="2">Belongs to the class-I aminoacyl-tRNA synthetase family. MetG type 2B subfamily.</text>
</comment>
<proteinExistence type="inferred from homology"/>
<protein>
    <recommendedName>
        <fullName>Methionine--tRNA ligase</fullName>
        <ecNumber>6.1.1.10</ecNumber>
    </recommendedName>
    <alternativeName>
        <fullName>Methionyl-tRNA synthetase</fullName>
        <shortName>MetRS</shortName>
    </alternativeName>
</protein>
<accession>Q8YAF2</accession>
<feature type="chain" id="PRO_0000139227" description="Methionine--tRNA ligase">
    <location>
        <begin position="1"/>
        <end position="664"/>
    </location>
</feature>
<feature type="domain" description="tRNA-binding">
    <location>
        <begin position="563"/>
        <end position="664"/>
    </location>
</feature>
<feature type="short sequence motif" description="'HIGH' region">
    <location>
        <begin position="15"/>
        <end position="25"/>
    </location>
</feature>
<feature type="short sequence motif" description="'KMSKS' region">
    <location>
        <begin position="310"/>
        <end position="314"/>
    </location>
</feature>
<feature type="binding site" evidence="1">
    <location>
        <position position="313"/>
    </location>
    <ligand>
        <name>ATP</name>
        <dbReference type="ChEBI" id="CHEBI:30616"/>
    </ligand>
</feature>
<keyword id="KW-0030">Aminoacyl-tRNA synthetase</keyword>
<keyword id="KW-0067">ATP-binding</keyword>
<keyword id="KW-0963">Cytoplasm</keyword>
<keyword id="KW-0436">Ligase</keyword>
<keyword id="KW-0547">Nucleotide-binding</keyword>
<keyword id="KW-0648">Protein biosynthesis</keyword>
<keyword id="KW-1185">Reference proteome</keyword>
<keyword id="KW-0694">RNA-binding</keyword>
<keyword id="KW-0820">tRNA-binding</keyword>
<gene>
    <name type="primary">metG</name>
    <name type="synonym">metS</name>
    <name type="ordered locus">lmo0177</name>
</gene>
<evidence type="ECO:0000250" key="1"/>
<evidence type="ECO:0000305" key="2"/>
<sequence>MPEEKNTFYITTPIYYPSGKAHIGHAYTTVAGDAMARYKRLKGYDVFYLTGTDEHGQKIQAKAKERGISEQEYVDEIAEGFQELWKKLEISNTDFIRTTQDRHKTSVEKIFEQLLEQGDIYLGEYEGWYSVSDEEYFTETQLEEVYKDENGKVIGGKAPSGNEVELVKEESYFFRMSKYADRLVEYYNSHPEFILPESRKNEMINNFIKPGLEDLAVSRTTFDWGIKVPGNPKHVVYVWIDALSNYITALGYNTDNDTKFQKYWPADVQIVGKEIVRFHTIYWPIMLMALDLPLPKMVFGHGWILMKDGKMSKSKGNVVDPYMLIDRYGLDALRYYLLREVPFGSDGLFTPEDFVDRVNFDLANDLGNLLNRTVAMINKYFDGEIPAYQGNVTEFDQILVDFKNNVVKEYEGSMDHMQFSVALNQLWSLISRTNKYIDETAPWALAKDEDKRTELASVMTHLAENLRIIAVLLQPFLTRTPGEIFLQLGLQEENLKKWDSIYGYGEIPAGTTVVKKGTPIFPRLDAEVEVTYIQDEMKGSAPAPAEEVAEVEALETPQIGIEDFDKIDLRVAEVKQVDKVKKADKLLCFQLDLGEGKLRQVLSGIAEFYQPEELIGKKVIVVSNLKPVKLRGLMSEGMILSGEKDGKLSVIEASSALPNGAKVK</sequence>
<reference key="1">
    <citation type="journal article" date="2001" name="Science">
        <title>Comparative genomics of Listeria species.</title>
        <authorList>
            <person name="Glaser P."/>
            <person name="Frangeul L."/>
            <person name="Buchrieser C."/>
            <person name="Rusniok C."/>
            <person name="Amend A."/>
            <person name="Baquero F."/>
            <person name="Berche P."/>
            <person name="Bloecker H."/>
            <person name="Brandt P."/>
            <person name="Chakraborty T."/>
            <person name="Charbit A."/>
            <person name="Chetouani F."/>
            <person name="Couve E."/>
            <person name="de Daruvar A."/>
            <person name="Dehoux P."/>
            <person name="Domann E."/>
            <person name="Dominguez-Bernal G."/>
            <person name="Duchaud E."/>
            <person name="Durant L."/>
            <person name="Dussurget O."/>
            <person name="Entian K.-D."/>
            <person name="Fsihi H."/>
            <person name="Garcia-del Portillo F."/>
            <person name="Garrido P."/>
            <person name="Gautier L."/>
            <person name="Goebel W."/>
            <person name="Gomez-Lopez N."/>
            <person name="Hain T."/>
            <person name="Hauf J."/>
            <person name="Jackson D."/>
            <person name="Jones L.-M."/>
            <person name="Kaerst U."/>
            <person name="Kreft J."/>
            <person name="Kuhn M."/>
            <person name="Kunst F."/>
            <person name="Kurapkat G."/>
            <person name="Madueno E."/>
            <person name="Maitournam A."/>
            <person name="Mata Vicente J."/>
            <person name="Ng E."/>
            <person name="Nedjari H."/>
            <person name="Nordsiek G."/>
            <person name="Novella S."/>
            <person name="de Pablos B."/>
            <person name="Perez-Diaz J.-C."/>
            <person name="Purcell R."/>
            <person name="Remmel B."/>
            <person name="Rose M."/>
            <person name="Schlueter T."/>
            <person name="Simoes N."/>
            <person name="Tierrez A."/>
            <person name="Vazquez-Boland J.-A."/>
            <person name="Voss H."/>
            <person name="Wehland J."/>
            <person name="Cossart P."/>
        </authorList>
    </citation>
    <scope>NUCLEOTIDE SEQUENCE [LARGE SCALE GENOMIC DNA]</scope>
    <source>
        <strain>ATCC BAA-679 / EGD-e</strain>
    </source>
</reference>
<name>SYM_LISMO</name>
<dbReference type="EC" id="6.1.1.10"/>
<dbReference type="EMBL" id="AL591973">
    <property type="protein sequence ID" value="CAC98392.1"/>
    <property type="molecule type" value="Genomic_DNA"/>
</dbReference>
<dbReference type="PIR" id="AB1097">
    <property type="entry name" value="AB1097"/>
</dbReference>
<dbReference type="RefSeq" id="NP_463708.1">
    <property type="nucleotide sequence ID" value="NC_003210.1"/>
</dbReference>
<dbReference type="RefSeq" id="WP_003733137.1">
    <property type="nucleotide sequence ID" value="NC_003210.1"/>
</dbReference>
<dbReference type="SMR" id="Q8YAF2"/>
<dbReference type="STRING" id="169963.gene:17592813"/>
<dbReference type="PaxDb" id="169963-lmo0177"/>
<dbReference type="EnsemblBacteria" id="CAC98392">
    <property type="protein sequence ID" value="CAC98392"/>
    <property type="gene ID" value="CAC98392"/>
</dbReference>
<dbReference type="GeneID" id="986940"/>
<dbReference type="KEGG" id="lmo:lmo0177"/>
<dbReference type="PATRIC" id="fig|169963.11.peg.182"/>
<dbReference type="eggNOG" id="COG0073">
    <property type="taxonomic scope" value="Bacteria"/>
</dbReference>
<dbReference type="eggNOG" id="COG0143">
    <property type="taxonomic scope" value="Bacteria"/>
</dbReference>
<dbReference type="HOGENOM" id="CLU_009710_9_4_9"/>
<dbReference type="OrthoDB" id="9810191at2"/>
<dbReference type="PhylomeDB" id="Q8YAF2"/>
<dbReference type="BioCyc" id="LMON169963:LMO0177-MONOMER"/>
<dbReference type="Proteomes" id="UP000000817">
    <property type="component" value="Chromosome"/>
</dbReference>
<dbReference type="GO" id="GO:0005737">
    <property type="term" value="C:cytoplasm"/>
    <property type="evidence" value="ECO:0007669"/>
    <property type="project" value="UniProtKB-SubCell"/>
</dbReference>
<dbReference type="GO" id="GO:0005524">
    <property type="term" value="F:ATP binding"/>
    <property type="evidence" value="ECO:0007669"/>
    <property type="project" value="UniProtKB-UniRule"/>
</dbReference>
<dbReference type="GO" id="GO:0004825">
    <property type="term" value="F:methionine-tRNA ligase activity"/>
    <property type="evidence" value="ECO:0000318"/>
    <property type="project" value="GO_Central"/>
</dbReference>
<dbReference type="GO" id="GO:0000049">
    <property type="term" value="F:tRNA binding"/>
    <property type="evidence" value="ECO:0007669"/>
    <property type="project" value="UniProtKB-KW"/>
</dbReference>
<dbReference type="GO" id="GO:0006431">
    <property type="term" value="P:methionyl-tRNA aminoacylation"/>
    <property type="evidence" value="ECO:0000318"/>
    <property type="project" value="GO_Central"/>
</dbReference>
<dbReference type="CDD" id="cd07957">
    <property type="entry name" value="Anticodon_Ia_Met"/>
    <property type="match status" value="1"/>
</dbReference>
<dbReference type="CDD" id="cd00814">
    <property type="entry name" value="MetRS_core"/>
    <property type="match status" value="1"/>
</dbReference>
<dbReference type="CDD" id="cd02800">
    <property type="entry name" value="tRNA_bind_EcMetRS_like"/>
    <property type="match status" value="1"/>
</dbReference>
<dbReference type="FunFam" id="1.10.730.10:FF:000026">
    <property type="entry name" value="Methionine--tRNA ligase"/>
    <property type="match status" value="1"/>
</dbReference>
<dbReference type="FunFam" id="2.170.220.10:FF:000002">
    <property type="entry name" value="Methionine--tRNA ligase"/>
    <property type="match status" value="1"/>
</dbReference>
<dbReference type="FunFam" id="2.40.50.140:FF:000042">
    <property type="entry name" value="Methionine--tRNA ligase"/>
    <property type="match status" value="1"/>
</dbReference>
<dbReference type="Gene3D" id="2.170.220.10">
    <property type="match status" value="1"/>
</dbReference>
<dbReference type="Gene3D" id="3.40.50.620">
    <property type="entry name" value="HUPs"/>
    <property type="match status" value="1"/>
</dbReference>
<dbReference type="Gene3D" id="1.10.730.10">
    <property type="entry name" value="Isoleucyl-tRNA Synthetase, Domain 1"/>
    <property type="match status" value="1"/>
</dbReference>
<dbReference type="Gene3D" id="2.40.50.140">
    <property type="entry name" value="Nucleic acid-binding proteins"/>
    <property type="match status" value="1"/>
</dbReference>
<dbReference type="HAMAP" id="MF_01228">
    <property type="entry name" value="Met_tRNA_synth_type2"/>
    <property type="match status" value="1"/>
</dbReference>
<dbReference type="InterPro" id="IPR041872">
    <property type="entry name" value="Anticodon_Met"/>
</dbReference>
<dbReference type="InterPro" id="IPR004495">
    <property type="entry name" value="Met-tRNA-synth_bsu_C"/>
</dbReference>
<dbReference type="InterPro" id="IPR014758">
    <property type="entry name" value="Met-tRNA_synth"/>
</dbReference>
<dbReference type="InterPro" id="IPR023457">
    <property type="entry name" value="Met-tRNA_synth_2"/>
</dbReference>
<dbReference type="InterPro" id="IPR015413">
    <property type="entry name" value="Methionyl/Leucyl_tRNA_Synth"/>
</dbReference>
<dbReference type="InterPro" id="IPR033911">
    <property type="entry name" value="MetRS_core"/>
</dbReference>
<dbReference type="InterPro" id="IPR012340">
    <property type="entry name" value="NA-bd_OB-fold"/>
</dbReference>
<dbReference type="InterPro" id="IPR014729">
    <property type="entry name" value="Rossmann-like_a/b/a_fold"/>
</dbReference>
<dbReference type="InterPro" id="IPR002547">
    <property type="entry name" value="tRNA-bd_dom"/>
</dbReference>
<dbReference type="InterPro" id="IPR009080">
    <property type="entry name" value="tRNAsynth_Ia_anticodon-bd"/>
</dbReference>
<dbReference type="NCBIfam" id="TIGR00398">
    <property type="entry name" value="metG"/>
    <property type="match status" value="1"/>
</dbReference>
<dbReference type="NCBIfam" id="TIGR00399">
    <property type="entry name" value="metG_C_term"/>
    <property type="match status" value="1"/>
</dbReference>
<dbReference type="NCBIfam" id="NF008900">
    <property type="entry name" value="PRK12267.1"/>
    <property type="match status" value="1"/>
</dbReference>
<dbReference type="PANTHER" id="PTHR43326:SF1">
    <property type="entry name" value="METHIONINE--TRNA LIGASE, MITOCHONDRIAL"/>
    <property type="match status" value="1"/>
</dbReference>
<dbReference type="PANTHER" id="PTHR43326">
    <property type="entry name" value="METHIONYL-TRNA SYNTHETASE"/>
    <property type="match status" value="1"/>
</dbReference>
<dbReference type="Pfam" id="PF19303">
    <property type="entry name" value="Anticodon_3"/>
    <property type="match status" value="1"/>
</dbReference>
<dbReference type="Pfam" id="PF09334">
    <property type="entry name" value="tRNA-synt_1g"/>
    <property type="match status" value="1"/>
</dbReference>
<dbReference type="Pfam" id="PF01588">
    <property type="entry name" value="tRNA_bind"/>
    <property type="match status" value="1"/>
</dbReference>
<dbReference type="PRINTS" id="PR01041">
    <property type="entry name" value="TRNASYNTHMET"/>
</dbReference>
<dbReference type="SUPFAM" id="SSF47323">
    <property type="entry name" value="Anticodon-binding domain of a subclass of class I aminoacyl-tRNA synthetases"/>
    <property type="match status" value="1"/>
</dbReference>
<dbReference type="SUPFAM" id="SSF50249">
    <property type="entry name" value="Nucleic acid-binding proteins"/>
    <property type="match status" value="1"/>
</dbReference>
<dbReference type="SUPFAM" id="SSF52374">
    <property type="entry name" value="Nucleotidylyl transferase"/>
    <property type="match status" value="1"/>
</dbReference>
<dbReference type="PROSITE" id="PS50886">
    <property type="entry name" value="TRBD"/>
    <property type="match status" value="1"/>
</dbReference>